<organism>
    <name type="scientific">Homo sapiens</name>
    <name type="common">Human</name>
    <dbReference type="NCBI Taxonomy" id="9606"/>
    <lineage>
        <taxon>Eukaryota</taxon>
        <taxon>Metazoa</taxon>
        <taxon>Chordata</taxon>
        <taxon>Craniata</taxon>
        <taxon>Vertebrata</taxon>
        <taxon>Euteleostomi</taxon>
        <taxon>Mammalia</taxon>
        <taxon>Eutheria</taxon>
        <taxon>Euarchontoglires</taxon>
        <taxon>Primates</taxon>
        <taxon>Haplorrhini</taxon>
        <taxon>Catarrhini</taxon>
        <taxon>Hominidae</taxon>
        <taxon>Homo</taxon>
    </lineage>
</organism>
<accession>Q8N7G0</accession>
<accession>Q15169</accession>
<accession>Q6MZL7</accession>
<accession>Q8N748</accession>
<keyword id="KW-0238">DNA-binding</keyword>
<keyword id="KW-0371">Homeobox</keyword>
<keyword id="KW-0539">Nucleus</keyword>
<keyword id="KW-1267">Proteomics identification</keyword>
<keyword id="KW-1185">Reference proteome</keyword>
<keyword id="KW-0804">Transcription</keyword>
<keyword id="KW-0805">Transcription regulation</keyword>
<feature type="chain" id="PRO_0000100756" description="POU domain, class 5, transcription factor 2">
    <location>
        <begin position="1"/>
        <end position="328"/>
    </location>
</feature>
<feature type="domain" description="POU-specific" evidence="3">
    <location>
        <begin position="118"/>
        <end position="192"/>
    </location>
</feature>
<feature type="DNA-binding region" description="Homeobox" evidence="2">
    <location>
        <begin position="210"/>
        <end position="269"/>
    </location>
</feature>
<feature type="region of interest" description="Disordered" evidence="4">
    <location>
        <begin position="1"/>
        <end position="25"/>
    </location>
</feature>
<feature type="sequence conflict" description="In Ref. 2; AAH29532." evidence="6" ref="2">
    <original>A</original>
    <variation>D</variation>
    <location>
        <position position="2"/>
    </location>
</feature>
<feature type="sequence conflict" description="In Ref. 3; CAE46012." evidence="6" ref="3">
    <original>F</original>
    <variation>L</variation>
    <location>
        <position position="229"/>
    </location>
</feature>
<dbReference type="EMBL" id="AK098546">
    <property type="protein sequence ID" value="BAC05328.1"/>
    <property type="molecule type" value="mRNA"/>
</dbReference>
<dbReference type="EMBL" id="BC029532">
    <property type="protein sequence ID" value="AAH29532.2"/>
    <property type="molecule type" value="mRNA"/>
</dbReference>
<dbReference type="EMBL" id="BX641019">
    <property type="protein sequence ID" value="CAE46012.1"/>
    <property type="molecule type" value="mRNA"/>
</dbReference>
<dbReference type="EMBL" id="Z21965">
    <property type="protein sequence ID" value="CAA79976.1"/>
    <property type="molecule type" value="mRNA"/>
</dbReference>
<dbReference type="CCDS" id="CCDS59489.1"/>
<dbReference type="RefSeq" id="NP_694948.1">
    <property type="nucleotide sequence ID" value="NM_153216.2"/>
</dbReference>
<dbReference type="SMR" id="Q8N7G0"/>
<dbReference type="BioGRID" id="126388">
    <property type="interactions" value="2"/>
</dbReference>
<dbReference type="FunCoup" id="Q8N7G0">
    <property type="interactions" value="57"/>
</dbReference>
<dbReference type="IntAct" id="Q8N7G0">
    <property type="interactions" value="1"/>
</dbReference>
<dbReference type="STRING" id="9606.ENSP00000489796"/>
<dbReference type="GlyGen" id="Q8N7G0">
    <property type="glycosylation" value="1 site"/>
</dbReference>
<dbReference type="iPTMnet" id="Q8N7G0"/>
<dbReference type="PhosphoSitePlus" id="Q8N7G0"/>
<dbReference type="BioMuta" id="POU5F2"/>
<dbReference type="DMDM" id="28201897"/>
<dbReference type="MassIVE" id="Q8N7G0"/>
<dbReference type="PaxDb" id="9606-ENSP00000464890"/>
<dbReference type="PeptideAtlas" id="Q8N7G0"/>
<dbReference type="Antibodypedia" id="64781">
    <property type="antibodies" value="123 antibodies from 21 providers"/>
</dbReference>
<dbReference type="DNASU" id="134187"/>
<dbReference type="Ensembl" id="ENST00000606183.4">
    <property type="protein sequence ID" value="ENSP00000489796.1"/>
    <property type="gene ID" value="ENSG00000248483.7"/>
</dbReference>
<dbReference type="GeneID" id="134187"/>
<dbReference type="KEGG" id="hsa:134187"/>
<dbReference type="MANE-Select" id="ENST00000606183.4">
    <property type="protein sequence ID" value="ENSP00000489796.1"/>
    <property type="RefSeq nucleotide sequence ID" value="NM_153216.2"/>
    <property type="RefSeq protein sequence ID" value="NP_694948.1"/>
</dbReference>
<dbReference type="UCSC" id="uc003kkl.2">
    <property type="organism name" value="human"/>
</dbReference>
<dbReference type="AGR" id="HGNC:26367"/>
<dbReference type="CTD" id="134187"/>
<dbReference type="DisGeNET" id="134187"/>
<dbReference type="GeneCards" id="POU5F2"/>
<dbReference type="HGNC" id="HGNC:26367">
    <property type="gene designation" value="POU5F2"/>
</dbReference>
<dbReference type="HPA" id="ENSG00000248483">
    <property type="expression patterns" value="Tissue enhanced (retina, testis)"/>
</dbReference>
<dbReference type="neXtProt" id="NX_Q8N7G0"/>
<dbReference type="OpenTargets" id="ENSG00000248483"/>
<dbReference type="PharmGKB" id="PA162399970"/>
<dbReference type="VEuPathDB" id="HostDB:ENSG00000248483"/>
<dbReference type="eggNOG" id="KOG3802">
    <property type="taxonomic scope" value="Eukaryota"/>
</dbReference>
<dbReference type="GeneTree" id="ENSGT00940000164293"/>
<dbReference type="HOGENOM" id="CLU_066243_0_0_1"/>
<dbReference type="InParanoid" id="Q8N7G0"/>
<dbReference type="OMA" id="GPYIALR"/>
<dbReference type="OrthoDB" id="9561544at2759"/>
<dbReference type="PAN-GO" id="Q8N7G0">
    <property type="GO annotations" value="3 GO annotations based on evolutionary models"/>
</dbReference>
<dbReference type="PhylomeDB" id="Q8N7G0"/>
<dbReference type="PathwayCommons" id="Q8N7G0"/>
<dbReference type="BioGRID-ORCS" id="134187">
    <property type="hits" value="16 hits in 1146 CRISPR screens"/>
</dbReference>
<dbReference type="GenomeRNAi" id="134187"/>
<dbReference type="Pharos" id="Q8N7G0">
    <property type="development level" value="Tdark"/>
</dbReference>
<dbReference type="PRO" id="PR:Q8N7G0"/>
<dbReference type="Proteomes" id="UP000005640">
    <property type="component" value="Chromosome 5"/>
</dbReference>
<dbReference type="RNAct" id="Q8N7G0">
    <property type="molecule type" value="protein"/>
</dbReference>
<dbReference type="Bgee" id="ENSG00000248483">
    <property type="expression patterns" value="Expressed in male germ line stem cell (sensu Vertebrata) in testis and 16 other cell types or tissues"/>
</dbReference>
<dbReference type="GO" id="GO:0000785">
    <property type="term" value="C:chromatin"/>
    <property type="evidence" value="ECO:0000247"/>
    <property type="project" value="NTNU_SB"/>
</dbReference>
<dbReference type="GO" id="GO:0005634">
    <property type="term" value="C:nucleus"/>
    <property type="evidence" value="ECO:0007669"/>
    <property type="project" value="UniProtKB-SubCell"/>
</dbReference>
<dbReference type="GO" id="GO:0000981">
    <property type="term" value="F:DNA-binding transcription factor activity, RNA polymerase II-specific"/>
    <property type="evidence" value="ECO:0000247"/>
    <property type="project" value="NTNU_SB"/>
</dbReference>
<dbReference type="GO" id="GO:0000978">
    <property type="term" value="F:RNA polymerase II cis-regulatory region sequence-specific DNA binding"/>
    <property type="evidence" value="ECO:0000318"/>
    <property type="project" value="GO_Central"/>
</dbReference>
<dbReference type="GO" id="GO:0006357">
    <property type="term" value="P:regulation of transcription by RNA polymerase II"/>
    <property type="evidence" value="ECO:0000318"/>
    <property type="project" value="GO_Central"/>
</dbReference>
<dbReference type="CDD" id="cd00086">
    <property type="entry name" value="homeodomain"/>
    <property type="match status" value="1"/>
</dbReference>
<dbReference type="Gene3D" id="1.10.10.60">
    <property type="entry name" value="Homeodomain-like"/>
    <property type="match status" value="1"/>
</dbReference>
<dbReference type="Gene3D" id="1.10.260.40">
    <property type="entry name" value="lambda repressor-like DNA-binding domains"/>
    <property type="match status" value="1"/>
</dbReference>
<dbReference type="InterPro" id="IPR001356">
    <property type="entry name" value="HD"/>
</dbReference>
<dbReference type="InterPro" id="IPR009057">
    <property type="entry name" value="Homeodomain-like_sf"/>
</dbReference>
<dbReference type="InterPro" id="IPR010982">
    <property type="entry name" value="Lambda_DNA-bd_dom_sf"/>
</dbReference>
<dbReference type="InterPro" id="IPR013847">
    <property type="entry name" value="POU"/>
</dbReference>
<dbReference type="InterPro" id="IPR000327">
    <property type="entry name" value="POU_dom"/>
</dbReference>
<dbReference type="InterPro" id="IPR050255">
    <property type="entry name" value="POU_domain_TF"/>
</dbReference>
<dbReference type="PANTHER" id="PTHR11636">
    <property type="entry name" value="POU DOMAIN"/>
    <property type="match status" value="1"/>
</dbReference>
<dbReference type="PANTHER" id="PTHR11636:SF14">
    <property type="entry name" value="POU DOMAIN, CLASS 5, TRANSCRIPTION FACTOR 2"/>
    <property type="match status" value="1"/>
</dbReference>
<dbReference type="Pfam" id="PF00046">
    <property type="entry name" value="Homeodomain"/>
    <property type="match status" value="1"/>
</dbReference>
<dbReference type="Pfam" id="PF00157">
    <property type="entry name" value="Pou"/>
    <property type="match status" value="1"/>
</dbReference>
<dbReference type="PRINTS" id="PR00028">
    <property type="entry name" value="POUDOMAIN"/>
</dbReference>
<dbReference type="SMART" id="SM00389">
    <property type="entry name" value="HOX"/>
    <property type="match status" value="1"/>
</dbReference>
<dbReference type="SMART" id="SM00352">
    <property type="entry name" value="POU"/>
    <property type="match status" value="1"/>
</dbReference>
<dbReference type="SUPFAM" id="SSF46689">
    <property type="entry name" value="Homeodomain-like"/>
    <property type="match status" value="1"/>
</dbReference>
<dbReference type="SUPFAM" id="SSF47413">
    <property type="entry name" value="lambda repressor-like DNA-binding domains"/>
    <property type="match status" value="1"/>
</dbReference>
<dbReference type="PROSITE" id="PS50071">
    <property type="entry name" value="HOMEOBOX_2"/>
    <property type="match status" value="1"/>
</dbReference>
<dbReference type="PROSITE" id="PS00035">
    <property type="entry name" value="POU_1"/>
    <property type="match status" value="1"/>
</dbReference>
<dbReference type="PROSITE" id="PS00465">
    <property type="entry name" value="POU_2"/>
    <property type="match status" value="1"/>
</dbReference>
<dbReference type="PROSITE" id="PS51179">
    <property type="entry name" value="POU_3"/>
    <property type="match status" value="1"/>
</dbReference>
<reference key="1">
    <citation type="journal article" date="2004" name="Nat. Genet.">
        <title>Complete sequencing and characterization of 21,243 full-length human cDNAs.</title>
        <authorList>
            <person name="Ota T."/>
            <person name="Suzuki Y."/>
            <person name="Nishikawa T."/>
            <person name="Otsuki T."/>
            <person name="Sugiyama T."/>
            <person name="Irie R."/>
            <person name="Wakamatsu A."/>
            <person name="Hayashi K."/>
            <person name="Sato H."/>
            <person name="Nagai K."/>
            <person name="Kimura K."/>
            <person name="Makita H."/>
            <person name="Sekine M."/>
            <person name="Obayashi M."/>
            <person name="Nishi T."/>
            <person name="Shibahara T."/>
            <person name="Tanaka T."/>
            <person name="Ishii S."/>
            <person name="Yamamoto J."/>
            <person name="Saito K."/>
            <person name="Kawai Y."/>
            <person name="Isono Y."/>
            <person name="Nakamura Y."/>
            <person name="Nagahari K."/>
            <person name="Murakami K."/>
            <person name="Yasuda T."/>
            <person name="Iwayanagi T."/>
            <person name="Wagatsuma M."/>
            <person name="Shiratori A."/>
            <person name="Sudo H."/>
            <person name="Hosoiri T."/>
            <person name="Kaku Y."/>
            <person name="Kodaira H."/>
            <person name="Kondo H."/>
            <person name="Sugawara M."/>
            <person name="Takahashi M."/>
            <person name="Kanda K."/>
            <person name="Yokoi T."/>
            <person name="Furuya T."/>
            <person name="Kikkawa E."/>
            <person name="Omura Y."/>
            <person name="Abe K."/>
            <person name="Kamihara K."/>
            <person name="Katsuta N."/>
            <person name="Sato K."/>
            <person name="Tanikawa M."/>
            <person name="Yamazaki M."/>
            <person name="Ninomiya K."/>
            <person name="Ishibashi T."/>
            <person name="Yamashita H."/>
            <person name="Murakawa K."/>
            <person name="Fujimori K."/>
            <person name="Tanai H."/>
            <person name="Kimata M."/>
            <person name="Watanabe M."/>
            <person name="Hiraoka S."/>
            <person name="Chiba Y."/>
            <person name="Ishida S."/>
            <person name="Ono Y."/>
            <person name="Takiguchi S."/>
            <person name="Watanabe S."/>
            <person name="Yosida M."/>
            <person name="Hotuta T."/>
            <person name="Kusano J."/>
            <person name="Kanehori K."/>
            <person name="Takahashi-Fujii A."/>
            <person name="Hara H."/>
            <person name="Tanase T.-O."/>
            <person name="Nomura Y."/>
            <person name="Togiya S."/>
            <person name="Komai F."/>
            <person name="Hara R."/>
            <person name="Takeuchi K."/>
            <person name="Arita M."/>
            <person name="Imose N."/>
            <person name="Musashino K."/>
            <person name="Yuuki H."/>
            <person name="Oshima A."/>
            <person name="Sasaki N."/>
            <person name="Aotsuka S."/>
            <person name="Yoshikawa Y."/>
            <person name="Matsunawa H."/>
            <person name="Ichihara T."/>
            <person name="Shiohata N."/>
            <person name="Sano S."/>
            <person name="Moriya S."/>
            <person name="Momiyama H."/>
            <person name="Satoh N."/>
            <person name="Takami S."/>
            <person name="Terashima Y."/>
            <person name="Suzuki O."/>
            <person name="Nakagawa S."/>
            <person name="Senoh A."/>
            <person name="Mizoguchi H."/>
            <person name="Goto Y."/>
            <person name="Shimizu F."/>
            <person name="Wakebe H."/>
            <person name="Hishigaki H."/>
            <person name="Watanabe T."/>
            <person name="Sugiyama A."/>
            <person name="Takemoto M."/>
            <person name="Kawakami B."/>
            <person name="Yamazaki M."/>
            <person name="Watanabe K."/>
            <person name="Kumagai A."/>
            <person name="Itakura S."/>
            <person name="Fukuzumi Y."/>
            <person name="Fujimori Y."/>
            <person name="Komiyama M."/>
            <person name="Tashiro H."/>
            <person name="Tanigami A."/>
            <person name="Fujiwara T."/>
            <person name="Ono T."/>
            <person name="Yamada K."/>
            <person name="Fujii Y."/>
            <person name="Ozaki K."/>
            <person name="Hirao M."/>
            <person name="Ohmori Y."/>
            <person name="Kawabata A."/>
            <person name="Hikiji T."/>
            <person name="Kobatake N."/>
            <person name="Inagaki H."/>
            <person name="Ikema Y."/>
            <person name="Okamoto S."/>
            <person name="Okitani R."/>
            <person name="Kawakami T."/>
            <person name="Noguchi S."/>
            <person name="Itoh T."/>
            <person name="Shigeta K."/>
            <person name="Senba T."/>
            <person name="Matsumura K."/>
            <person name="Nakajima Y."/>
            <person name="Mizuno T."/>
            <person name="Morinaga M."/>
            <person name="Sasaki M."/>
            <person name="Togashi T."/>
            <person name="Oyama M."/>
            <person name="Hata H."/>
            <person name="Watanabe M."/>
            <person name="Komatsu T."/>
            <person name="Mizushima-Sugano J."/>
            <person name="Satoh T."/>
            <person name="Shirai Y."/>
            <person name="Takahashi Y."/>
            <person name="Nakagawa K."/>
            <person name="Okumura K."/>
            <person name="Nagase T."/>
            <person name="Nomura N."/>
            <person name="Kikuchi H."/>
            <person name="Masuho Y."/>
            <person name="Yamashita R."/>
            <person name="Nakai K."/>
            <person name="Yada T."/>
            <person name="Nakamura Y."/>
            <person name="Ohara O."/>
            <person name="Isogai T."/>
            <person name="Sugano S."/>
        </authorList>
    </citation>
    <scope>NUCLEOTIDE SEQUENCE [LARGE SCALE MRNA]</scope>
    <source>
        <tissue>Testis</tissue>
    </source>
</reference>
<reference key="2">
    <citation type="journal article" date="2004" name="Genome Res.">
        <title>The status, quality, and expansion of the NIH full-length cDNA project: the Mammalian Gene Collection (MGC).</title>
        <authorList>
            <consortium name="The MGC Project Team"/>
        </authorList>
    </citation>
    <scope>NUCLEOTIDE SEQUENCE [LARGE SCALE MRNA]</scope>
    <source>
        <tissue>Testis</tissue>
    </source>
</reference>
<reference key="3">
    <citation type="journal article" date="2007" name="BMC Genomics">
        <title>The full-ORF clone resource of the German cDNA consortium.</title>
        <authorList>
            <person name="Bechtel S."/>
            <person name="Rosenfelder H."/>
            <person name="Duda A."/>
            <person name="Schmidt C.P."/>
            <person name="Ernst U."/>
            <person name="Wellenreuther R."/>
            <person name="Mehrle A."/>
            <person name="Schuster C."/>
            <person name="Bahr A."/>
            <person name="Bloecker H."/>
            <person name="Heubner D."/>
            <person name="Hoerlein A."/>
            <person name="Michel G."/>
            <person name="Wedler H."/>
            <person name="Koehrer K."/>
            <person name="Ottenwaelder B."/>
            <person name="Poustka A."/>
            <person name="Wiemann S."/>
            <person name="Schupp I."/>
        </authorList>
    </citation>
    <scope>NUCLEOTIDE SEQUENCE [LARGE SCALE MRNA] OF 148-328</scope>
    <source>
        <tissue>Uterus</tissue>
    </source>
</reference>
<reference key="4">
    <citation type="journal article" date="1994" name="Eur. J. Biochem.">
        <title>A human POU domain gene, mPOU, is expressed in developing brain and specific adult tissues.</title>
        <authorList>
            <person name="Wey E."/>
            <person name="Lyons G.E."/>
            <person name="Schaefer B.W."/>
        </authorList>
    </citation>
    <scope>NUCLEOTIDE SEQUENCE [MRNA] OF 168-254</scope>
    <scope>TISSUE SPECIFICITY</scope>
    <source>
        <tissue>Skeletal muscle</tissue>
    </source>
</reference>
<name>PO5F2_HUMAN</name>
<protein>
    <recommendedName>
        <fullName>POU domain, class 5, transcription factor 2</fullName>
    </recommendedName>
    <alternativeName>
        <fullName>Sperm 1 POU domain transcription factor</fullName>
        <shortName>SPRM-1</shortName>
    </alternativeName>
</protein>
<gene>
    <name type="primary">POU5F2</name>
    <name type="synonym">SPRM1</name>
</gene>
<evidence type="ECO:0000250" key="1"/>
<evidence type="ECO:0000255" key="2">
    <source>
        <dbReference type="PROSITE-ProRule" id="PRU00108"/>
    </source>
</evidence>
<evidence type="ECO:0000255" key="3">
    <source>
        <dbReference type="PROSITE-ProRule" id="PRU00530"/>
    </source>
</evidence>
<evidence type="ECO:0000256" key="4">
    <source>
        <dbReference type="SAM" id="MobiDB-lite"/>
    </source>
</evidence>
<evidence type="ECO:0000269" key="5">
    <source>
    </source>
</evidence>
<evidence type="ECO:0000305" key="6"/>
<comment type="function">
    <text evidence="1">Transcription factor that binds preferentially to the octamer motif (5'-ATGTTAAT-3'). May exert a regulatory function in meiotic events that are required for terminal differentiation of male germ cell (By similarity).</text>
</comment>
<comment type="interaction">
    <interactant intactId="EBI-12849044">
        <id>Q8N7G0</id>
    </interactant>
    <interactant intactId="EBI-11962084">
        <id>Q3LI66</id>
        <label>KRTAP6-2</label>
    </interactant>
    <organismsDiffer>false</organismsDiffer>
    <experiments>3</experiments>
</comment>
<comment type="subcellular location">
    <subcellularLocation>
        <location evidence="2 3">Nucleus</location>
    </subcellularLocation>
</comment>
<comment type="tissue specificity">
    <text evidence="5">Expressed in skeletal and cardiac muscles, brain, heart and lung. Little or no detectable expression found in pancreas, kidney, liver or placenta.</text>
</comment>
<comment type="similarity">
    <text evidence="6">Belongs to the POU transcription factor family. Class-5 subfamily.</text>
</comment>
<sequence length="328" mass="36051">MAGHRPSNHFCPLPGSGGGGPRGPMPLRVDTLTWLSTQAAPGRVMVWPAVRPGICPGPDVWRIPLGPLPHEFRGWIAPCRPRLGASEAGDWLRRPSEGALPGPYIALRSIPKLPPPEDISGILKELQQLAKELRQKRLSLGYSQADVGIAVGALFGKVLSQTTICRFEAQQLSVANMWKLRPLLKKWLKEVEAENLLGLCKMEMILQQSGKWRRASRERRIGNSLEKFFQRCPKPTPQQISHIAGCLQLQKDVVRVWFYNRSKMGSRPTNDASPREIVGTAGPPCPGAPVCFHLGLGLPVDIPHYTRLYSAGVAHSSAPATTLGLLRF</sequence>
<proteinExistence type="evidence at protein level"/>